<name>Y3899_PSEPW</name>
<protein>
    <recommendedName>
        <fullName evidence="1">YcgL domain-containing protein PputW619_3899</fullName>
    </recommendedName>
</protein>
<feature type="chain" id="PRO_0000375338" description="YcgL domain-containing protein PputW619_3899">
    <location>
        <begin position="1"/>
        <end position="97"/>
    </location>
</feature>
<feature type="domain" description="YcgL" evidence="1">
    <location>
        <begin position="3"/>
        <end position="87"/>
    </location>
</feature>
<reference key="1">
    <citation type="submission" date="2008-02" db="EMBL/GenBank/DDBJ databases">
        <title>Complete sequence of Pseudomonas putida W619.</title>
        <authorList>
            <person name="Copeland A."/>
            <person name="Lucas S."/>
            <person name="Lapidus A."/>
            <person name="Barry K."/>
            <person name="Detter J.C."/>
            <person name="Glavina del Rio T."/>
            <person name="Dalin E."/>
            <person name="Tice H."/>
            <person name="Pitluck S."/>
            <person name="Chain P."/>
            <person name="Malfatti S."/>
            <person name="Shin M."/>
            <person name="Vergez L."/>
            <person name="Schmutz J."/>
            <person name="Larimer F."/>
            <person name="Land M."/>
            <person name="Hauser L."/>
            <person name="Kyrpides N."/>
            <person name="Kim E."/>
            <person name="Taghavi S."/>
            <person name="Vangronsveld D."/>
            <person name="van der Lelie D."/>
            <person name="Richardson P."/>
        </authorList>
    </citation>
    <scope>NUCLEOTIDE SEQUENCE [LARGE SCALE GENOMIC DNA]</scope>
    <source>
        <strain>W619</strain>
    </source>
</reference>
<sequence>MKRICSIYKSPRKNEMYLYVLKAEGLERVPEALLPFFGTPVHAFDLVLSPERKLAREDIVKVLDNLENQGYHLQMPPAEDEYIEHLPEELLRRNDPV</sequence>
<proteinExistence type="inferred from homology"/>
<evidence type="ECO:0000255" key="1">
    <source>
        <dbReference type="HAMAP-Rule" id="MF_01866"/>
    </source>
</evidence>
<organism>
    <name type="scientific">Pseudomonas putida (strain W619)</name>
    <dbReference type="NCBI Taxonomy" id="390235"/>
    <lineage>
        <taxon>Bacteria</taxon>
        <taxon>Pseudomonadati</taxon>
        <taxon>Pseudomonadota</taxon>
        <taxon>Gammaproteobacteria</taxon>
        <taxon>Pseudomonadales</taxon>
        <taxon>Pseudomonadaceae</taxon>
        <taxon>Pseudomonas</taxon>
    </lineage>
</organism>
<accession>B1JCV3</accession>
<gene>
    <name type="ordered locus">PputW619_3899</name>
</gene>
<dbReference type="EMBL" id="CP000949">
    <property type="protein sequence ID" value="ACA74379.1"/>
    <property type="molecule type" value="Genomic_DNA"/>
</dbReference>
<dbReference type="SMR" id="B1JCV3"/>
<dbReference type="STRING" id="390235.PputW619_3899"/>
<dbReference type="KEGG" id="ppw:PputW619_3899"/>
<dbReference type="eggNOG" id="COG3100">
    <property type="taxonomic scope" value="Bacteria"/>
</dbReference>
<dbReference type="HOGENOM" id="CLU_155118_2_0_6"/>
<dbReference type="OrthoDB" id="7062382at2"/>
<dbReference type="Gene3D" id="3.10.510.20">
    <property type="entry name" value="YcgL domain"/>
    <property type="match status" value="1"/>
</dbReference>
<dbReference type="HAMAP" id="MF_01866">
    <property type="entry name" value="UPF0745"/>
    <property type="match status" value="1"/>
</dbReference>
<dbReference type="InterPro" id="IPR038068">
    <property type="entry name" value="YcgL-like_sf"/>
</dbReference>
<dbReference type="InterPro" id="IPR027354">
    <property type="entry name" value="YcgL_dom"/>
</dbReference>
<dbReference type="PANTHER" id="PTHR38109">
    <property type="entry name" value="PROTEIN YCGL"/>
    <property type="match status" value="1"/>
</dbReference>
<dbReference type="PANTHER" id="PTHR38109:SF1">
    <property type="entry name" value="PROTEIN YCGL"/>
    <property type="match status" value="1"/>
</dbReference>
<dbReference type="Pfam" id="PF05166">
    <property type="entry name" value="YcgL"/>
    <property type="match status" value="1"/>
</dbReference>
<dbReference type="SUPFAM" id="SSF160191">
    <property type="entry name" value="YcgL-like"/>
    <property type="match status" value="1"/>
</dbReference>
<dbReference type="PROSITE" id="PS51648">
    <property type="entry name" value="YCGL"/>
    <property type="match status" value="1"/>
</dbReference>